<organism>
    <name type="scientific">Haemophilus influenzae (strain PittGG)</name>
    <dbReference type="NCBI Taxonomy" id="374931"/>
    <lineage>
        <taxon>Bacteria</taxon>
        <taxon>Pseudomonadati</taxon>
        <taxon>Pseudomonadota</taxon>
        <taxon>Gammaproteobacteria</taxon>
        <taxon>Pasteurellales</taxon>
        <taxon>Pasteurellaceae</taxon>
        <taxon>Haemophilus</taxon>
    </lineage>
</organism>
<dbReference type="EMBL" id="CP000672">
    <property type="protein sequence ID" value="ABR00318.1"/>
    <property type="molecule type" value="Genomic_DNA"/>
</dbReference>
<dbReference type="SMR" id="A5UHR2"/>
<dbReference type="KEGG" id="hiq:CGSHiGG_07285"/>
<dbReference type="HOGENOM" id="CLU_114306_4_3_6"/>
<dbReference type="Proteomes" id="UP000001990">
    <property type="component" value="Chromosome"/>
</dbReference>
<dbReference type="GO" id="GO:1990904">
    <property type="term" value="C:ribonucleoprotein complex"/>
    <property type="evidence" value="ECO:0007669"/>
    <property type="project" value="UniProtKB-KW"/>
</dbReference>
<dbReference type="GO" id="GO:0005840">
    <property type="term" value="C:ribosome"/>
    <property type="evidence" value="ECO:0007669"/>
    <property type="project" value="UniProtKB-KW"/>
</dbReference>
<dbReference type="GO" id="GO:0046872">
    <property type="term" value="F:metal ion binding"/>
    <property type="evidence" value="ECO:0007669"/>
    <property type="project" value="UniProtKB-KW"/>
</dbReference>
<dbReference type="GO" id="GO:0019843">
    <property type="term" value="F:rRNA binding"/>
    <property type="evidence" value="ECO:0007669"/>
    <property type="project" value="UniProtKB-KW"/>
</dbReference>
<dbReference type="GO" id="GO:0003735">
    <property type="term" value="F:structural constituent of ribosome"/>
    <property type="evidence" value="ECO:0007669"/>
    <property type="project" value="InterPro"/>
</dbReference>
<dbReference type="GO" id="GO:0006412">
    <property type="term" value="P:translation"/>
    <property type="evidence" value="ECO:0007669"/>
    <property type="project" value="UniProtKB-UniRule"/>
</dbReference>
<dbReference type="FunFam" id="4.10.830.30:FF:000001">
    <property type="entry name" value="50S ribosomal protein L31"/>
    <property type="match status" value="1"/>
</dbReference>
<dbReference type="Gene3D" id="4.10.830.30">
    <property type="entry name" value="Ribosomal protein L31"/>
    <property type="match status" value="1"/>
</dbReference>
<dbReference type="HAMAP" id="MF_00501">
    <property type="entry name" value="Ribosomal_bL31_1"/>
    <property type="match status" value="1"/>
</dbReference>
<dbReference type="InterPro" id="IPR034704">
    <property type="entry name" value="Ribosomal_bL28/bL31-like_sf"/>
</dbReference>
<dbReference type="InterPro" id="IPR002150">
    <property type="entry name" value="Ribosomal_bL31"/>
</dbReference>
<dbReference type="InterPro" id="IPR027491">
    <property type="entry name" value="Ribosomal_bL31_A"/>
</dbReference>
<dbReference type="InterPro" id="IPR042105">
    <property type="entry name" value="Ribosomal_bL31_sf"/>
</dbReference>
<dbReference type="NCBIfam" id="TIGR00105">
    <property type="entry name" value="L31"/>
    <property type="match status" value="1"/>
</dbReference>
<dbReference type="NCBIfam" id="NF000612">
    <property type="entry name" value="PRK00019.1"/>
    <property type="match status" value="1"/>
</dbReference>
<dbReference type="NCBIfam" id="NF001809">
    <property type="entry name" value="PRK00528.1"/>
    <property type="match status" value="1"/>
</dbReference>
<dbReference type="PANTHER" id="PTHR33280">
    <property type="entry name" value="50S RIBOSOMAL PROTEIN L31, CHLOROPLASTIC"/>
    <property type="match status" value="1"/>
</dbReference>
<dbReference type="PANTHER" id="PTHR33280:SF6">
    <property type="entry name" value="LARGE RIBOSOMAL SUBUNIT PROTEIN BL31A"/>
    <property type="match status" value="1"/>
</dbReference>
<dbReference type="Pfam" id="PF01197">
    <property type="entry name" value="Ribosomal_L31"/>
    <property type="match status" value="1"/>
</dbReference>
<dbReference type="PRINTS" id="PR01249">
    <property type="entry name" value="RIBOSOMALL31"/>
</dbReference>
<dbReference type="SUPFAM" id="SSF143800">
    <property type="entry name" value="L28p-like"/>
    <property type="match status" value="1"/>
</dbReference>
<dbReference type="PROSITE" id="PS01143">
    <property type="entry name" value="RIBOSOMAL_L31"/>
    <property type="match status" value="1"/>
</dbReference>
<sequence>MKQGIHPEYKEITATCSCGNVIKTRSTLGKDINLDVCGNCHPFYTGKQRVVDTGGRVERFNSRFKIPSTK</sequence>
<evidence type="ECO:0000255" key="1">
    <source>
        <dbReference type="HAMAP-Rule" id="MF_00501"/>
    </source>
</evidence>
<evidence type="ECO:0000305" key="2"/>
<feature type="chain" id="PRO_1000126640" description="Large ribosomal subunit protein bL31">
    <location>
        <begin position="1"/>
        <end position="70"/>
    </location>
</feature>
<feature type="binding site" evidence="1">
    <location>
        <position position="16"/>
    </location>
    <ligand>
        <name>Zn(2+)</name>
        <dbReference type="ChEBI" id="CHEBI:29105"/>
    </ligand>
</feature>
<feature type="binding site" evidence="1">
    <location>
        <position position="18"/>
    </location>
    <ligand>
        <name>Zn(2+)</name>
        <dbReference type="ChEBI" id="CHEBI:29105"/>
    </ligand>
</feature>
<feature type="binding site" evidence="1">
    <location>
        <position position="37"/>
    </location>
    <ligand>
        <name>Zn(2+)</name>
        <dbReference type="ChEBI" id="CHEBI:29105"/>
    </ligand>
</feature>
<feature type="binding site" evidence="1">
    <location>
        <position position="40"/>
    </location>
    <ligand>
        <name>Zn(2+)</name>
        <dbReference type="ChEBI" id="CHEBI:29105"/>
    </ligand>
</feature>
<reference key="1">
    <citation type="journal article" date="2007" name="Genome Biol.">
        <title>Characterization and modeling of the Haemophilus influenzae core and supragenomes based on the complete genomic sequences of Rd and 12 clinical nontypeable strains.</title>
        <authorList>
            <person name="Hogg J.S."/>
            <person name="Hu F.Z."/>
            <person name="Janto B."/>
            <person name="Boissy R."/>
            <person name="Hayes J."/>
            <person name="Keefe R."/>
            <person name="Post J.C."/>
            <person name="Ehrlich G.D."/>
        </authorList>
    </citation>
    <scope>NUCLEOTIDE SEQUENCE [LARGE SCALE GENOMIC DNA]</scope>
    <source>
        <strain>PittGG</strain>
    </source>
</reference>
<keyword id="KW-0479">Metal-binding</keyword>
<keyword id="KW-0687">Ribonucleoprotein</keyword>
<keyword id="KW-0689">Ribosomal protein</keyword>
<keyword id="KW-0694">RNA-binding</keyword>
<keyword id="KW-0699">rRNA-binding</keyword>
<keyword id="KW-0862">Zinc</keyword>
<comment type="function">
    <text evidence="1">Binds the 23S rRNA.</text>
</comment>
<comment type="cofactor">
    <cofactor evidence="1">
        <name>Zn(2+)</name>
        <dbReference type="ChEBI" id="CHEBI:29105"/>
    </cofactor>
    <text evidence="1">Binds 1 zinc ion per subunit.</text>
</comment>
<comment type="subunit">
    <text evidence="1">Part of the 50S ribosomal subunit.</text>
</comment>
<comment type="similarity">
    <text evidence="1">Belongs to the bacterial ribosomal protein bL31 family. Type A subfamily.</text>
</comment>
<accession>A5UHR2</accession>
<gene>
    <name evidence="1" type="primary">rpmE</name>
    <name type="ordered locus">CGSHiGG_07285</name>
</gene>
<protein>
    <recommendedName>
        <fullName evidence="1">Large ribosomal subunit protein bL31</fullName>
    </recommendedName>
    <alternativeName>
        <fullName evidence="2">50S ribosomal protein L31</fullName>
    </alternativeName>
</protein>
<name>RL31_HAEIG</name>
<proteinExistence type="inferred from homology"/>